<name>EFG_ACIET</name>
<organism>
    <name type="scientific">Acidovorax ebreus (strain TPSY)</name>
    <name type="common">Diaphorobacter sp. (strain TPSY)</name>
    <dbReference type="NCBI Taxonomy" id="535289"/>
    <lineage>
        <taxon>Bacteria</taxon>
        <taxon>Pseudomonadati</taxon>
        <taxon>Pseudomonadota</taxon>
        <taxon>Betaproteobacteria</taxon>
        <taxon>Burkholderiales</taxon>
        <taxon>Comamonadaceae</taxon>
        <taxon>Diaphorobacter</taxon>
    </lineage>
</organism>
<keyword id="KW-0963">Cytoplasm</keyword>
<keyword id="KW-0251">Elongation factor</keyword>
<keyword id="KW-0342">GTP-binding</keyword>
<keyword id="KW-0547">Nucleotide-binding</keyword>
<keyword id="KW-0648">Protein biosynthesis</keyword>
<keyword id="KW-1185">Reference proteome</keyword>
<evidence type="ECO:0000255" key="1">
    <source>
        <dbReference type="HAMAP-Rule" id="MF_00054"/>
    </source>
</evidence>
<protein>
    <recommendedName>
        <fullName evidence="1">Elongation factor G</fullName>
        <shortName evidence="1">EF-G</shortName>
    </recommendedName>
</protein>
<feature type="chain" id="PRO_1000201456" description="Elongation factor G">
    <location>
        <begin position="1"/>
        <end position="702"/>
    </location>
</feature>
<feature type="domain" description="tr-type G">
    <location>
        <begin position="8"/>
        <end position="290"/>
    </location>
</feature>
<feature type="binding site" evidence="1">
    <location>
        <begin position="17"/>
        <end position="24"/>
    </location>
    <ligand>
        <name>GTP</name>
        <dbReference type="ChEBI" id="CHEBI:37565"/>
    </ligand>
</feature>
<feature type="binding site" evidence="1">
    <location>
        <begin position="88"/>
        <end position="92"/>
    </location>
    <ligand>
        <name>GTP</name>
        <dbReference type="ChEBI" id="CHEBI:37565"/>
    </ligand>
</feature>
<feature type="binding site" evidence="1">
    <location>
        <begin position="142"/>
        <end position="145"/>
    </location>
    <ligand>
        <name>GTP</name>
        <dbReference type="ChEBI" id="CHEBI:37565"/>
    </ligand>
</feature>
<reference key="1">
    <citation type="submission" date="2009-01" db="EMBL/GenBank/DDBJ databases">
        <title>Complete sequence of Diaphorobacter sp. TPSY.</title>
        <authorList>
            <consortium name="US DOE Joint Genome Institute"/>
            <person name="Lucas S."/>
            <person name="Copeland A."/>
            <person name="Lapidus A."/>
            <person name="Glavina del Rio T."/>
            <person name="Tice H."/>
            <person name="Bruce D."/>
            <person name="Goodwin L."/>
            <person name="Pitluck S."/>
            <person name="Chertkov O."/>
            <person name="Brettin T."/>
            <person name="Detter J.C."/>
            <person name="Han C."/>
            <person name="Larimer F."/>
            <person name="Land M."/>
            <person name="Hauser L."/>
            <person name="Kyrpides N."/>
            <person name="Mikhailova N."/>
            <person name="Coates J.D."/>
        </authorList>
    </citation>
    <scope>NUCLEOTIDE SEQUENCE [LARGE SCALE GENOMIC DNA]</scope>
    <source>
        <strain>TPSY</strain>
    </source>
</reference>
<accession>B9MB70</accession>
<proteinExistence type="inferred from homology"/>
<sequence length="702" mass="77548">MARKTPIERYRNIGISAHIDAGKTTTTERILFYTGVTHKLGEVHDGAATTDWMEQEQERGITITSAAVTCFWKGMDMSYPEHRFNIIDTPGHVDFTIEVERSMRVLDGACMVYCAVGGVQPQSETVWRQANKYKVPRLAFVNKMDRTGANFFKVVDQIKTRLKGNPVPVVVPIGAEDNFKGVVDLLKMKAIIWDEASQGMKFEYADIPAEVKETAEKWRENMVEAAAEASEELMNKYLDEGTLSEEDIKAGLRARTLAVEIQPMLCGTAFKNKGVQRMLDAVIDYLPSPVDIPDVEGTDPDDEEKKLARKADDGEKFSALAFKLMTDPFVGQLTFVRVYSGVLSKGDTVFNSVKGKKERIGRIVQMMANERIEVDEIRAGDIAACVGLKDVTTGETLSDVDNPIILERMVFPEPVIAQAVEPKSKADQEKMGIALSRLASEDPSFRVRTDEESGQTIIAGMGELHLEIIVDRMKREFNVEANVGKPQVAYRETVRKTVTDVDGKFVRQSGGKGQYGHVVFTLEPQEAGKGFEFVDEIKGGVVPREYIPAVEKGVIEALTSGVLAGYPVVDVKVRLTFGSYHDVDSSEQAFKMAAIFGFKEAARKANPVILEPMMAVEVETPEDYAGTVMGDLSSRRGMVQGMDDMVGGGKAIKAEVPLSEMFGYATQLRSMTQGRATYTMEFKHYAEAPRNVSEAIVAARAK</sequence>
<dbReference type="EMBL" id="CP001392">
    <property type="protein sequence ID" value="ACM31754.1"/>
    <property type="molecule type" value="Genomic_DNA"/>
</dbReference>
<dbReference type="RefSeq" id="WP_012655360.1">
    <property type="nucleotide sequence ID" value="NC_011992.1"/>
</dbReference>
<dbReference type="SMR" id="B9MB70"/>
<dbReference type="KEGG" id="dia:Dtpsy_0270"/>
<dbReference type="eggNOG" id="COG0480">
    <property type="taxonomic scope" value="Bacteria"/>
</dbReference>
<dbReference type="HOGENOM" id="CLU_002794_4_1_4"/>
<dbReference type="Proteomes" id="UP000000450">
    <property type="component" value="Chromosome"/>
</dbReference>
<dbReference type="GO" id="GO:0005737">
    <property type="term" value="C:cytoplasm"/>
    <property type="evidence" value="ECO:0007669"/>
    <property type="project" value="UniProtKB-SubCell"/>
</dbReference>
<dbReference type="GO" id="GO:0005525">
    <property type="term" value="F:GTP binding"/>
    <property type="evidence" value="ECO:0007669"/>
    <property type="project" value="UniProtKB-UniRule"/>
</dbReference>
<dbReference type="GO" id="GO:0003924">
    <property type="term" value="F:GTPase activity"/>
    <property type="evidence" value="ECO:0007669"/>
    <property type="project" value="InterPro"/>
</dbReference>
<dbReference type="GO" id="GO:0097216">
    <property type="term" value="F:guanosine tetraphosphate binding"/>
    <property type="evidence" value="ECO:0007669"/>
    <property type="project" value="UniProtKB-ARBA"/>
</dbReference>
<dbReference type="GO" id="GO:0003746">
    <property type="term" value="F:translation elongation factor activity"/>
    <property type="evidence" value="ECO:0007669"/>
    <property type="project" value="UniProtKB-UniRule"/>
</dbReference>
<dbReference type="GO" id="GO:0032790">
    <property type="term" value="P:ribosome disassembly"/>
    <property type="evidence" value="ECO:0007669"/>
    <property type="project" value="TreeGrafter"/>
</dbReference>
<dbReference type="CDD" id="cd01886">
    <property type="entry name" value="EF-G"/>
    <property type="match status" value="1"/>
</dbReference>
<dbReference type="CDD" id="cd16262">
    <property type="entry name" value="EFG_III"/>
    <property type="match status" value="1"/>
</dbReference>
<dbReference type="CDD" id="cd01434">
    <property type="entry name" value="EFG_mtEFG1_IV"/>
    <property type="match status" value="1"/>
</dbReference>
<dbReference type="CDD" id="cd03713">
    <property type="entry name" value="EFG_mtEFG_C"/>
    <property type="match status" value="1"/>
</dbReference>
<dbReference type="CDD" id="cd04088">
    <property type="entry name" value="EFG_mtEFG_II"/>
    <property type="match status" value="1"/>
</dbReference>
<dbReference type="FunFam" id="2.40.30.10:FF:000006">
    <property type="entry name" value="Elongation factor G"/>
    <property type="match status" value="1"/>
</dbReference>
<dbReference type="FunFam" id="3.30.230.10:FF:000003">
    <property type="entry name" value="Elongation factor G"/>
    <property type="match status" value="1"/>
</dbReference>
<dbReference type="FunFam" id="3.30.70.240:FF:000001">
    <property type="entry name" value="Elongation factor G"/>
    <property type="match status" value="1"/>
</dbReference>
<dbReference type="FunFam" id="3.30.70.870:FF:000001">
    <property type="entry name" value="Elongation factor G"/>
    <property type="match status" value="1"/>
</dbReference>
<dbReference type="FunFam" id="3.40.50.300:FF:000029">
    <property type="entry name" value="Elongation factor G"/>
    <property type="match status" value="1"/>
</dbReference>
<dbReference type="Gene3D" id="3.30.230.10">
    <property type="match status" value="1"/>
</dbReference>
<dbReference type="Gene3D" id="3.30.70.240">
    <property type="match status" value="1"/>
</dbReference>
<dbReference type="Gene3D" id="3.30.70.870">
    <property type="entry name" value="Elongation Factor G (Translational Gtpase), domain 3"/>
    <property type="match status" value="1"/>
</dbReference>
<dbReference type="Gene3D" id="3.40.50.300">
    <property type="entry name" value="P-loop containing nucleotide triphosphate hydrolases"/>
    <property type="match status" value="1"/>
</dbReference>
<dbReference type="Gene3D" id="2.40.30.10">
    <property type="entry name" value="Translation factors"/>
    <property type="match status" value="1"/>
</dbReference>
<dbReference type="HAMAP" id="MF_00054_B">
    <property type="entry name" value="EF_G_EF_2_B"/>
    <property type="match status" value="1"/>
</dbReference>
<dbReference type="InterPro" id="IPR041095">
    <property type="entry name" value="EFG_II"/>
</dbReference>
<dbReference type="InterPro" id="IPR009022">
    <property type="entry name" value="EFG_III"/>
</dbReference>
<dbReference type="InterPro" id="IPR035647">
    <property type="entry name" value="EFG_III/V"/>
</dbReference>
<dbReference type="InterPro" id="IPR047872">
    <property type="entry name" value="EFG_IV"/>
</dbReference>
<dbReference type="InterPro" id="IPR035649">
    <property type="entry name" value="EFG_V"/>
</dbReference>
<dbReference type="InterPro" id="IPR000640">
    <property type="entry name" value="EFG_V-like"/>
</dbReference>
<dbReference type="InterPro" id="IPR004161">
    <property type="entry name" value="EFTu-like_2"/>
</dbReference>
<dbReference type="InterPro" id="IPR031157">
    <property type="entry name" value="G_TR_CS"/>
</dbReference>
<dbReference type="InterPro" id="IPR027417">
    <property type="entry name" value="P-loop_NTPase"/>
</dbReference>
<dbReference type="InterPro" id="IPR020568">
    <property type="entry name" value="Ribosomal_Su5_D2-typ_SF"/>
</dbReference>
<dbReference type="InterPro" id="IPR014721">
    <property type="entry name" value="Ribsml_uS5_D2-typ_fold_subgr"/>
</dbReference>
<dbReference type="InterPro" id="IPR005225">
    <property type="entry name" value="Small_GTP-bd"/>
</dbReference>
<dbReference type="InterPro" id="IPR000795">
    <property type="entry name" value="T_Tr_GTP-bd_dom"/>
</dbReference>
<dbReference type="InterPro" id="IPR009000">
    <property type="entry name" value="Transl_B-barrel_sf"/>
</dbReference>
<dbReference type="InterPro" id="IPR004540">
    <property type="entry name" value="Transl_elong_EFG/EF2"/>
</dbReference>
<dbReference type="InterPro" id="IPR005517">
    <property type="entry name" value="Transl_elong_EFG/EF2_IV"/>
</dbReference>
<dbReference type="NCBIfam" id="TIGR00484">
    <property type="entry name" value="EF-G"/>
    <property type="match status" value="1"/>
</dbReference>
<dbReference type="NCBIfam" id="NF009379">
    <property type="entry name" value="PRK12740.1-3"/>
    <property type="match status" value="1"/>
</dbReference>
<dbReference type="NCBIfam" id="NF009381">
    <property type="entry name" value="PRK12740.1-5"/>
    <property type="match status" value="1"/>
</dbReference>
<dbReference type="NCBIfam" id="TIGR00231">
    <property type="entry name" value="small_GTP"/>
    <property type="match status" value="1"/>
</dbReference>
<dbReference type="PANTHER" id="PTHR43261:SF1">
    <property type="entry name" value="RIBOSOME-RELEASING FACTOR 2, MITOCHONDRIAL"/>
    <property type="match status" value="1"/>
</dbReference>
<dbReference type="PANTHER" id="PTHR43261">
    <property type="entry name" value="TRANSLATION ELONGATION FACTOR G-RELATED"/>
    <property type="match status" value="1"/>
</dbReference>
<dbReference type="Pfam" id="PF00679">
    <property type="entry name" value="EFG_C"/>
    <property type="match status" value="1"/>
</dbReference>
<dbReference type="Pfam" id="PF14492">
    <property type="entry name" value="EFG_III"/>
    <property type="match status" value="1"/>
</dbReference>
<dbReference type="Pfam" id="PF03764">
    <property type="entry name" value="EFG_IV"/>
    <property type="match status" value="1"/>
</dbReference>
<dbReference type="Pfam" id="PF00009">
    <property type="entry name" value="GTP_EFTU"/>
    <property type="match status" value="1"/>
</dbReference>
<dbReference type="Pfam" id="PF03144">
    <property type="entry name" value="GTP_EFTU_D2"/>
    <property type="match status" value="1"/>
</dbReference>
<dbReference type="PRINTS" id="PR00315">
    <property type="entry name" value="ELONGATNFCT"/>
</dbReference>
<dbReference type="SMART" id="SM00838">
    <property type="entry name" value="EFG_C"/>
    <property type="match status" value="1"/>
</dbReference>
<dbReference type="SMART" id="SM00889">
    <property type="entry name" value="EFG_IV"/>
    <property type="match status" value="1"/>
</dbReference>
<dbReference type="SUPFAM" id="SSF54980">
    <property type="entry name" value="EF-G C-terminal domain-like"/>
    <property type="match status" value="2"/>
</dbReference>
<dbReference type="SUPFAM" id="SSF52540">
    <property type="entry name" value="P-loop containing nucleoside triphosphate hydrolases"/>
    <property type="match status" value="1"/>
</dbReference>
<dbReference type="SUPFAM" id="SSF54211">
    <property type="entry name" value="Ribosomal protein S5 domain 2-like"/>
    <property type="match status" value="1"/>
</dbReference>
<dbReference type="SUPFAM" id="SSF50447">
    <property type="entry name" value="Translation proteins"/>
    <property type="match status" value="1"/>
</dbReference>
<dbReference type="PROSITE" id="PS00301">
    <property type="entry name" value="G_TR_1"/>
    <property type="match status" value="1"/>
</dbReference>
<dbReference type="PROSITE" id="PS51722">
    <property type="entry name" value="G_TR_2"/>
    <property type="match status" value="1"/>
</dbReference>
<gene>
    <name evidence="1" type="primary">fusA</name>
    <name type="ordered locus">Dtpsy_0270</name>
</gene>
<comment type="function">
    <text evidence="1">Catalyzes the GTP-dependent ribosomal translocation step during translation elongation. During this step, the ribosome changes from the pre-translocational (PRE) to the post-translocational (POST) state as the newly formed A-site-bound peptidyl-tRNA and P-site-bound deacylated tRNA move to the P and E sites, respectively. Catalyzes the coordinated movement of the two tRNA molecules, the mRNA and conformational changes in the ribosome.</text>
</comment>
<comment type="subcellular location">
    <subcellularLocation>
        <location evidence="1">Cytoplasm</location>
    </subcellularLocation>
</comment>
<comment type="similarity">
    <text evidence="1">Belongs to the TRAFAC class translation factor GTPase superfamily. Classic translation factor GTPase family. EF-G/EF-2 subfamily.</text>
</comment>